<gene>
    <name type="primary">ATG8B</name>
    <name type="synonym">APG8B</name>
    <name type="ordered locus">At4g04620</name>
    <name type="ORF">F4H6.14</name>
</gene>
<keyword id="KW-0072">Autophagy</keyword>
<keyword id="KW-0963">Cytoplasm</keyword>
<keyword id="KW-0968">Cytoplasmic vesicle</keyword>
<keyword id="KW-0206">Cytoskeleton</keyword>
<keyword id="KW-0449">Lipoprotein</keyword>
<keyword id="KW-0472">Membrane</keyword>
<keyword id="KW-0493">Microtubule</keyword>
<keyword id="KW-0653">Protein transport</keyword>
<keyword id="KW-1185">Reference proteome</keyword>
<keyword id="KW-0813">Transport</keyword>
<keyword id="KW-0833">Ubl conjugation pathway</keyword>
<keyword id="KW-0926">Vacuole</keyword>
<comment type="function">
    <text evidence="1">Ubiquitin-like modifier involved in autophagosomes formation. May mediate the delivery of the autophagosomes to the vacuole via the microtubule cytoskeleton.</text>
</comment>
<comment type="subunit">
    <text evidence="3 5">Interacts with ATG4 (By similarity). Interacts with NBR1 (PubMed:21606687).</text>
</comment>
<comment type="subcellular location">
    <subcellularLocation>
        <location evidence="1">Cytoplasmic vesicle</location>
        <location evidence="1">Autophagosome membrane</location>
        <topology evidence="1">Lipid-anchor</topology>
    </subcellularLocation>
    <subcellularLocation>
        <location evidence="1">Vacuole membrane</location>
        <topology evidence="1">Lipid-anchor</topology>
    </subcellularLocation>
    <subcellularLocation>
        <location evidence="3">Cytoplasm</location>
        <location evidence="3">Cytoskeleton</location>
    </subcellularLocation>
</comment>
<comment type="tissue specificity">
    <text evidence="4">Constitutively expressed.</text>
</comment>
<comment type="PTM">
    <text evidence="1">The C-terminal 5 residues are removed by ATG4 to expose Gly-117 at the C-terminus. This Gly-117 forms then a thioester bond with the 'Cys-558' of ATG7 (E1-like activating enzyme) before being transferred to the 'Cys-258' of ATG3 (the specific E2 conjugating enzyme), in order to be finally amidated with phosphatidylethanolamine. This lipid modification anchors ATG8 to autophagosomes.</text>
</comment>
<comment type="similarity">
    <text evidence="6">Belongs to the ATG8 family.</text>
</comment>
<proteinExistence type="evidence at protein level"/>
<evidence type="ECO:0000250" key="1">
    <source>
        <dbReference type="UniProtKB" id="P38182"/>
    </source>
</evidence>
<evidence type="ECO:0000250" key="2">
    <source>
        <dbReference type="UniProtKB" id="Q2XPP5"/>
    </source>
</evidence>
<evidence type="ECO:0000250" key="3">
    <source>
        <dbReference type="UniProtKB" id="Q8LEM4"/>
    </source>
</evidence>
<evidence type="ECO:0000269" key="4">
    <source>
    </source>
</evidence>
<evidence type="ECO:0000269" key="5">
    <source>
    </source>
</evidence>
<evidence type="ECO:0000305" key="6"/>
<protein>
    <recommendedName>
        <fullName>Autophagy-related protein 8b</fullName>
    </recommendedName>
    <alternativeName>
        <fullName>Autophagy-related ubiquitin-like modifier ATG8b</fullName>
        <shortName>AtAPG8b</shortName>
        <shortName>Protein autophagy 8b</shortName>
    </alternativeName>
</protein>
<reference key="1">
    <citation type="journal article" date="2002" name="Plant Physiol.">
        <title>Leaf senescence and starvation-induced chlorosis are accelerated by the disruption of an Arabidopsis autophagy gene.</title>
        <authorList>
            <person name="Hanaoka H."/>
            <person name="Noda T."/>
            <person name="Shirano Y."/>
            <person name="Kato T."/>
            <person name="Hayashi H."/>
            <person name="Shibata D."/>
            <person name="Tabata S."/>
            <person name="Ohsumi Y."/>
        </authorList>
    </citation>
    <scope>NUCLEOTIDE SEQUENCE [MRNA]</scope>
    <scope>NOMENCLATURE</scope>
    <scope>GENE FAMILY</scope>
</reference>
<reference key="2">
    <citation type="journal article" date="1999" name="Nature">
        <title>Sequence and analysis of chromosome 4 of the plant Arabidopsis thaliana.</title>
        <authorList>
            <person name="Mayer K.F.X."/>
            <person name="Schueller C."/>
            <person name="Wambutt R."/>
            <person name="Murphy G."/>
            <person name="Volckaert G."/>
            <person name="Pohl T."/>
            <person name="Duesterhoeft A."/>
            <person name="Stiekema W."/>
            <person name="Entian K.-D."/>
            <person name="Terryn N."/>
            <person name="Harris B."/>
            <person name="Ansorge W."/>
            <person name="Brandt P."/>
            <person name="Grivell L.A."/>
            <person name="Rieger M."/>
            <person name="Weichselgartner M."/>
            <person name="de Simone V."/>
            <person name="Obermaier B."/>
            <person name="Mache R."/>
            <person name="Mueller M."/>
            <person name="Kreis M."/>
            <person name="Delseny M."/>
            <person name="Puigdomenech P."/>
            <person name="Watson M."/>
            <person name="Schmidtheini T."/>
            <person name="Reichert B."/>
            <person name="Portetelle D."/>
            <person name="Perez-Alonso M."/>
            <person name="Boutry M."/>
            <person name="Bancroft I."/>
            <person name="Vos P."/>
            <person name="Hoheisel J."/>
            <person name="Zimmermann W."/>
            <person name="Wedler H."/>
            <person name="Ridley P."/>
            <person name="Langham S.-A."/>
            <person name="McCullagh B."/>
            <person name="Bilham L."/>
            <person name="Robben J."/>
            <person name="van der Schueren J."/>
            <person name="Grymonprez B."/>
            <person name="Chuang Y.-J."/>
            <person name="Vandenbussche F."/>
            <person name="Braeken M."/>
            <person name="Weltjens I."/>
            <person name="Voet M."/>
            <person name="Bastiaens I."/>
            <person name="Aert R."/>
            <person name="Defoor E."/>
            <person name="Weitzenegger T."/>
            <person name="Bothe G."/>
            <person name="Ramsperger U."/>
            <person name="Hilbert H."/>
            <person name="Braun M."/>
            <person name="Holzer E."/>
            <person name="Brandt A."/>
            <person name="Peters S."/>
            <person name="van Staveren M."/>
            <person name="Dirkse W."/>
            <person name="Mooijman P."/>
            <person name="Klein Lankhorst R."/>
            <person name="Rose M."/>
            <person name="Hauf J."/>
            <person name="Koetter P."/>
            <person name="Berneiser S."/>
            <person name="Hempel S."/>
            <person name="Feldpausch M."/>
            <person name="Lamberth S."/>
            <person name="Van den Daele H."/>
            <person name="De Keyser A."/>
            <person name="Buysshaert C."/>
            <person name="Gielen J."/>
            <person name="Villarroel R."/>
            <person name="De Clercq R."/>
            <person name="van Montagu M."/>
            <person name="Rogers J."/>
            <person name="Cronin A."/>
            <person name="Quail M.A."/>
            <person name="Bray-Allen S."/>
            <person name="Clark L."/>
            <person name="Doggett J."/>
            <person name="Hall S."/>
            <person name="Kay M."/>
            <person name="Lennard N."/>
            <person name="McLay K."/>
            <person name="Mayes R."/>
            <person name="Pettett A."/>
            <person name="Rajandream M.A."/>
            <person name="Lyne M."/>
            <person name="Benes V."/>
            <person name="Rechmann S."/>
            <person name="Borkova D."/>
            <person name="Bloecker H."/>
            <person name="Scharfe M."/>
            <person name="Grimm M."/>
            <person name="Loehnert T.-H."/>
            <person name="Dose S."/>
            <person name="de Haan M."/>
            <person name="Maarse A.C."/>
            <person name="Schaefer M."/>
            <person name="Mueller-Auer S."/>
            <person name="Gabel C."/>
            <person name="Fuchs M."/>
            <person name="Fartmann B."/>
            <person name="Granderath K."/>
            <person name="Dauner D."/>
            <person name="Herzl A."/>
            <person name="Neumann S."/>
            <person name="Argiriou A."/>
            <person name="Vitale D."/>
            <person name="Liguori R."/>
            <person name="Piravandi E."/>
            <person name="Massenet O."/>
            <person name="Quigley F."/>
            <person name="Clabauld G."/>
            <person name="Muendlein A."/>
            <person name="Felber R."/>
            <person name="Schnabl S."/>
            <person name="Hiller R."/>
            <person name="Schmidt W."/>
            <person name="Lecharny A."/>
            <person name="Aubourg S."/>
            <person name="Chefdor F."/>
            <person name="Cooke R."/>
            <person name="Berger C."/>
            <person name="Monfort A."/>
            <person name="Casacuberta E."/>
            <person name="Gibbons T."/>
            <person name="Weber N."/>
            <person name="Vandenbol M."/>
            <person name="Bargues M."/>
            <person name="Terol J."/>
            <person name="Torres A."/>
            <person name="Perez-Perez A."/>
            <person name="Purnelle B."/>
            <person name="Bent E."/>
            <person name="Johnson S."/>
            <person name="Tacon D."/>
            <person name="Jesse T."/>
            <person name="Heijnen L."/>
            <person name="Schwarz S."/>
            <person name="Scholler P."/>
            <person name="Heber S."/>
            <person name="Francs P."/>
            <person name="Bielke C."/>
            <person name="Frishman D."/>
            <person name="Haase D."/>
            <person name="Lemcke K."/>
            <person name="Mewes H.-W."/>
            <person name="Stocker S."/>
            <person name="Zaccaria P."/>
            <person name="Bevan M."/>
            <person name="Wilson R.K."/>
            <person name="de la Bastide M."/>
            <person name="Habermann K."/>
            <person name="Parnell L."/>
            <person name="Dedhia N."/>
            <person name="Gnoj L."/>
            <person name="Schutz K."/>
            <person name="Huang E."/>
            <person name="Spiegel L."/>
            <person name="Sekhon M."/>
            <person name="Murray J."/>
            <person name="Sheet P."/>
            <person name="Cordes M."/>
            <person name="Abu-Threideh J."/>
            <person name="Stoneking T."/>
            <person name="Kalicki J."/>
            <person name="Graves T."/>
            <person name="Harmon G."/>
            <person name="Edwards J."/>
            <person name="Latreille P."/>
            <person name="Courtney L."/>
            <person name="Cloud J."/>
            <person name="Abbott A."/>
            <person name="Scott K."/>
            <person name="Johnson D."/>
            <person name="Minx P."/>
            <person name="Bentley D."/>
            <person name="Fulton B."/>
            <person name="Miller N."/>
            <person name="Greco T."/>
            <person name="Kemp K."/>
            <person name="Kramer J."/>
            <person name="Fulton L."/>
            <person name="Mardis E."/>
            <person name="Dante M."/>
            <person name="Pepin K."/>
            <person name="Hillier L.W."/>
            <person name="Nelson J."/>
            <person name="Spieth J."/>
            <person name="Ryan E."/>
            <person name="Andrews S."/>
            <person name="Geisel C."/>
            <person name="Layman D."/>
            <person name="Du H."/>
            <person name="Ali J."/>
            <person name="Berghoff A."/>
            <person name="Jones K."/>
            <person name="Drone K."/>
            <person name="Cotton M."/>
            <person name="Joshu C."/>
            <person name="Antonoiu B."/>
            <person name="Zidanic M."/>
            <person name="Strong C."/>
            <person name="Sun H."/>
            <person name="Lamar B."/>
            <person name="Yordan C."/>
            <person name="Ma P."/>
            <person name="Zhong J."/>
            <person name="Preston R."/>
            <person name="Vil D."/>
            <person name="Shekher M."/>
            <person name="Matero A."/>
            <person name="Shah R."/>
            <person name="Swaby I.K."/>
            <person name="O'Shaughnessy A."/>
            <person name="Rodriguez M."/>
            <person name="Hoffman J."/>
            <person name="Till S."/>
            <person name="Granat S."/>
            <person name="Shohdy N."/>
            <person name="Hasegawa A."/>
            <person name="Hameed A."/>
            <person name="Lodhi M."/>
            <person name="Johnson A."/>
            <person name="Chen E."/>
            <person name="Marra M.A."/>
            <person name="Martienssen R."/>
            <person name="McCombie W.R."/>
        </authorList>
    </citation>
    <scope>NUCLEOTIDE SEQUENCE [LARGE SCALE GENOMIC DNA]</scope>
    <source>
        <strain>cv. Columbia</strain>
    </source>
</reference>
<reference key="3">
    <citation type="journal article" date="2017" name="Plant J.">
        <title>Araport11: a complete reannotation of the Arabidopsis thaliana reference genome.</title>
        <authorList>
            <person name="Cheng C.Y."/>
            <person name="Krishnakumar V."/>
            <person name="Chan A.P."/>
            <person name="Thibaud-Nissen F."/>
            <person name="Schobel S."/>
            <person name="Town C.D."/>
        </authorList>
    </citation>
    <scope>GENOME REANNOTATION</scope>
    <source>
        <strain>cv. Columbia</strain>
    </source>
</reference>
<reference key="4">
    <citation type="journal article" date="2003" name="Science">
        <title>Empirical analysis of transcriptional activity in the Arabidopsis genome.</title>
        <authorList>
            <person name="Yamada K."/>
            <person name="Lim J."/>
            <person name="Dale J.M."/>
            <person name="Chen H."/>
            <person name="Shinn P."/>
            <person name="Palm C.J."/>
            <person name="Southwick A.M."/>
            <person name="Wu H.C."/>
            <person name="Kim C.J."/>
            <person name="Nguyen M."/>
            <person name="Pham P.K."/>
            <person name="Cheuk R.F."/>
            <person name="Karlin-Newmann G."/>
            <person name="Liu S.X."/>
            <person name="Lam B."/>
            <person name="Sakano H."/>
            <person name="Wu T."/>
            <person name="Yu G."/>
            <person name="Miranda M."/>
            <person name="Quach H.L."/>
            <person name="Tripp M."/>
            <person name="Chang C.H."/>
            <person name="Lee J.M."/>
            <person name="Toriumi M.J."/>
            <person name="Chan M.M."/>
            <person name="Tang C.C."/>
            <person name="Onodera C.S."/>
            <person name="Deng J.M."/>
            <person name="Akiyama K."/>
            <person name="Ansari Y."/>
            <person name="Arakawa T."/>
            <person name="Banh J."/>
            <person name="Banno F."/>
            <person name="Bowser L."/>
            <person name="Brooks S.Y."/>
            <person name="Carninci P."/>
            <person name="Chao Q."/>
            <person name="Choy N."/>
            <person name="Enju A."/>
            <person name="Goldsmith A.D."/>
            <person name="Gurjal M."/>
            <person name="Hansen N.F."/>
            <person name="Hayashizaki Y."/>
            <person name="Johnson-Hopson C."/>
            <person name="Hsuan V.W."/>
            <person name="Iida K."/>
            <person name="Karnes M."/>
            <person name="Khan S."/>
            <person name="Koesema E."/>
            <person name="Ishida J."/>
            <person name="Jiang P.X."/>
            <person name="Jones T."/>
            <person name="Kawai J."/>
            <person name="Kamiya A."/>
            <person name="Meyers C."/>
            <person name="Nakajima M."/>
            <person name="Narusaka M."/>
            <person name="Seki M."/>
            <person name="Sakurai T."/>
            <person name="Satou M."/>
            <person name="Tamse R."/>
            <person name="Vaysberg M."/>
            <person name="Wallender E.K."/>
            <person name="Wong C."/>
            <person name="Yamamura Y."/>
            <person name="Yuan S."/>
            <person name="Shinozaki K."/>
            <person name="Davis R.W."/>
            <person name="Theologis A."/>
            <person name="Ecker J.R."/>
        </authorList>
    </citation>
    <scope>NUCLEOTIDE SEQUENCE [LARGE SCALE MRNA]</scope>
    <source>
        <strain>cv. Columbia</strain>
    </source>
</reference>
<reference key="5">
    <citation type="submission" date="2006-07" db="EMBL/GenBank/DDBJ databases">
        <title>Large-scale analysis of RIKEN Arabidopsis full-length (RAFL) cDNAs.</title>
        <authorList>
            <person name="Totoki Y."/>
            <person name="Seki M."/>
            <person name="Ishida J."/>
            <person name="Nakajima M."/>
            <person name="Enju A."/>
            <person name="Kamiya A."/>
            <person name="Narusaka M."/>
            <person name="Shin-i T."/>
            <person name="Nakagawa M."/>
            <person name="Sakamoto N."/>
            <person name="Oishi K."/>
            <person name="Kohara Y."/>
            <person name="Kobayashi M."/>
            <person name="Toyoda A."/>
            <person name="Sakaki Y."/>
            <person name="Sakurai T."/>
            <person name="Iida K."/>
            <person name="Akiyama K."/>
            <person name="Satou M."/>
            <person name="Toyoda T."/>
            <person name="Konagaya A."/>
            <person name="Carninci P."/>
            <person name="Kawai J."/>
            <person name="Hayashizaki Y."/>
            <person name="Shinozaki K."/>
        </authorList>
    </citation>
    <scope>NUCLEOTIDE SEQUENCE [LARGE SCALE MRNA]</scope>
    <source>
        <strain>cv. Columbia</strain>
    </source>
</reference>
<reference key="6">
    <citation type="submission" date="2002-03" db="EMBL/GenBank/DDBJ databases">
        <title>Full-length cDNA from Arabidopsis thaliana.</title>
        <authorList>
            <person name="Brover V.V."/>
            <person name="Troukhan M.E."/>
            <person name="Alexandrov N.A."/>
            <person name="Lu Y.-P."/>
            <person name="Flavell R.B."/>
            <person name="Feldmann K.A."/>
        </authorList>
    </citation>
    <scope>NUCLEOTIDE SEQUENCE [LARGE SCALE MRNA]</scope>
</reference>
<reference key="7">
    <citation type="journal article" date="2004" name="Plant Cell">
        <title>Processing of ATG8s, ubiquitin-like proteins, and their deconjugation by ATG4s are essential for plant autophagy.</title>
        <authorList>
            <person name="Yoshimoto K."/>
            <person name="Hanaoka H."/>
            <person name="Sato S."/>
            <person name="Kato T."/>
            <person name="Tabata S."/>
            <person name="Noda T."/>
            <person name="Ohsumi Y."/>
        </authorList>
    </citation>
    <scope>TISSUE SPECIFICITY</scope>
</reference>
<reference key="8">
    <citation type="journal article" date="2011" name="Autophagy">
        <title>Plant NBR1 is a selective autophagy substrate and a functional hybrid of the mammalian autophagic adapters NBR1 and p62/SQSTM1.</title>
        <authorList>
            <person name="Svenning S."/>
            <person name="Lamark T."/>
            <person name="Krause K."/>
            <person name="Johansen T."/>
        </authorList>
    </citation>
    <scope>INTERACTION WITH NBR1</scope>
</reference>
<feature type="chain" id="PRO_0000286907" description="Autophagy-related protein 8b">
    <location>
        <begin position="1"/>
        <end position="117"/>
    </location>
</feature>
<feature type="propeptide" id="PRO_0000286908" description="Removed in mature form" evidence="2">
    <location>
        <begin position="118"/>
        <end position="122"/>
    </location>
</feature>
<feature type="site" description="Cleavage; by ATG4" evidence="2">
    <location>
        <begin position="117"/>
        <end position="118"/>
    </location>
</feature>
<feature type="lipid moiety-binding region" description="Phosphatidylethanolamine amidated glycine" evidence="1">
    <location>
        <position position="117"/>
    </location>
</feature>
<accession>Q9XEB5</accession>
<organism>
    <name type="scientific">Arabidopsis thaliana</name>
    <name type="common">Mouse-ear cress</name>
    <dbReference type="NCBI Taxonomy" id="3702"/>
    <lineage>
        <taxon>Eukaryota</taxon>
        <taxon>Viridiplantae</taxon>
        <taxon>Streptophyta</taxon>
        <taxon>Embryophyta</taxon>
        <taxon>Tracheophyta</taxon>
        <taxon>Spermatophyta</taxon>
        <taxon>Magnoliopsida</taxon>
        <taxon>eudicotyledons</taxon>
        <taxon>Gunneridae</taxon>
        <taxon>Pentapetalae</taxon>
        <taxon>rosids</taxon>
        <taxon>malvids</taxon>
        <taxon>Brassicales</taxon>
        <taxon>Brassicaceae</taxon>
        <taxon>Camelineae</taxon>
        <taxon>Arabidopsis</taxon>
    </lineage>
</organism>
<sequence>MEKNSFKLSNPLEMRMAESTRIRAKYPERVPVIVEKAGQSDVPDIDKKKYLVPADLTIGQFVYVVRKRIKLGAEKAIFVFVKNTLPPTAALMSAIYEEHKDEDGFLYMTYSGENTFGGSFYC</sequence>
<dbReference type="EMBL" id="AB073176">
    <property type="protein sequence ID" value="BAB88388.1"/>
    <property type="molecule type" value="mRNA"/>
</dbReference>
<dbReference type="EMBL" id="AF074021">
    <property type="protein sequence ID" value="AAD29776.1"/>
    <property type="molecule type" value="Genomic_DNA"/>
</dbReference>
<dbReference type="EMBL" id="AL161501">
    <property type="protein sequence ID" value="CAB80827.1"/>
    <property type="molecule type" value="Genomic_DNA"/>
</dbReference>
<dbReference type="EMBL" id="CP002687">
    <property type="protein sequence ID" value="AEE82404.1"/>
    <property type="molecule type" value="Genomic_DNA"/>
</dbReference>
<dbReference type="EMBL" id="CP002687">
    <property type="protein sequence ID" value="AEE82405.1"/>
    <property type="molecule type" value="Genomic_DNA"/>
</dbReference>
<dbReference type="EMBL" id="CP002687">
    <property type="protein sequence ID" value="ANM67912.1"/>
    <property type="molecule type" value="Genomic_DNA"/>
</dbReference>
<dbReference type="EMBL" id="BT006385">
    <property type="protein sequence ID" value="AAP21193.1"/>
    <property type="molecule type" value="mRNA"/>
</dbReference>
<dbReference type="EMBL" id="AK227679">
    <property type="protein sequence ID" value="BAE99666.1"/>
    <property type="molecule type" value="mRNA"/>
</dbReference>
<dbReference type="EMBL" id="AY084859">
    <property type="protein sequence ID" value="AAM61423.1"/>
    <property type="molecule type" value="mRNA"/>
</dbReference>
<dbReference type="PIR" id="C85058">
    <property type="entry name" value="C85058"/>
</dbReference>
<dbReference type="RefSeq" id="NP_001329707.1">
    <property type="nucleotide sequence ID" value="NM_001340494.1"/>
</dbReference>
<dbReference type="RefSeq" id="NP_192371.1">
    <property type="nucleotide sequence ID" value="NM_116700.2"/>
</dbReference>
<dbReference type="RefSeq" id="NP_849298.1">
    <property type="nucleotide sequence ID" value="NM_178967.4"/>
</dbReference>
<dbReference type="SMR" id="Q9XEB5"/>
<dbReference type="BioGRID" id="11105">
    <property type="interactions" value="5"/>
</dbReference>
<dbReference type="FunCoup" id="Q9XEB5">
    <property type="interactions" value="1867"/>
</dbReference>
<dbReference type="IntAct" id="Q9XEB5">
    <property type="interactions" value="6"/>
</dbReference>
<dbReference type="STRING" id="3702.Q9XEB5"/>
<dbReference type="PaxDb" id="3702-AT4G04620.1"/>
<dbReference type="ProteomicsDB" id="246550"/>
<dbReference type="EnsemblPlants" id="AT4G04620.1">
    <property type="protein sequence ID" value="AT4G04620.1"/>
    <property type="gene ID" value="AT4G04620"/>
</dbReference>
<dbReference type="EnsemblPlants" id="AT4G04620.2">
    <property type="protein sequence ID" value="AT4G04620.2"/>
    <property type="gene ID" value="AT4G04620"/>
</dbReference>
<dbReference type="EnsemblPlants" id="AT4G04620.3">
    <property type="protein sequence ID" value="AT4G04620.3"/>
    <property type="gene ID" value="AT4G04620"/>
</dbReference>
<dbReference type="GeneID" id="825794"/>
<dbReference type="Gramene" id="AT4G04620.1">
    <property type="protein sequence ID" value="AT4G04620.1"/>
    <property type="gene ID" value="AT4G04620"/>
</dbReference>
<dbReference type="Gramene" id="AT4G04620.2">
    <property type="protein sequence ID" value="AT4G04620.2"/>
    <property type="gene ID" value="AT4G04620"/>
</dbReference>
<dbReference type="Gramene" id="AT4G04620.3">
    <property type="protein sequence ID" value="AT4G04620.3"/>
    <property type="gene ID" value="AT4G04620"/>
</dbReference>
<dbReference type="KEGG" id="ath:AT4G04620"/>
<dbReference type="Araport" id="AT4G04620"/>
<dbReference type="TAIR" id="AT4G04620">
    <property type="gene designation" value="ATG8B"/>
</dbReference>
<dbReference type="eggNOG" id="KOG1654">
    <property type="taxonomic scope" value="Eukaryota"/>
</dbReference>
<dbReference type="HOGENOM" id="CLU_119276_0_1_1"/>
<dbReference type="InParanoid" id="Q9XEB5"/>
<dbReference type="OMA" id="CTRERRQ"/>
<dbReference type="OrthoDB" id="6738456at2759"/>
<dbReference type="PhylomeDB" id="Q9XEB5"/>
<dbReference type="PRO" id="PR:Q9XEB5"/>
<dbReference type="Proteomes" id="UP000006548">
    <property type="component" value="Chromosome 4"/>
</dbReference>
<dbReference type="ExpressionAtlas" id="Q9XEB5">
    <property type="expression patterns" value="baseline and differential"/>
</dbReference>
<dbReference type="GO" id="GO:0005776">
    <property type="term" value="C:autophagosome"/>
    <property type="evidence" value="ECO:0000314"/>
    <property type="project" value="TAIR"/>
</dbReference>
<dbReference type="GO" id="GO:0000421">
    <property type="term" value="C:autophagosome membrane"/>
    <property type="evidence" value="ECO:0007669"/>
    <property type="project" value="UniProtKB-SubCell"/>
</dbReference>
<dbReference type="GO" id="GO:0031410">
    <property type="term" value="C:cytoplasmic vesicle"/>
    <property type="evidence" value="ECO:0007669"/>
    <property type="project" value="UniProtKB-KW"/>
</dbReference>
<dbReference type="GO" id="GO:0005874">
    <property type="term" value="C:microtubule"/>
    <property type="evidence" value="ECO:0007669"/>
    <property type="project" value="UniProtKB-KW"/>
</dbReference>
<dbReference type="GO" id="GO:0006914">
    <property type="term" value="P:autophagy"/>
    <property type="evidence" value="ECO:0007669"/>
    <property type="project" value="UniProtKB-KW"/>
</dbReference>
<dbReference type="GO" id="GO:0015031">
    <property type="term" value="P:protein transport"/>
    <property type="evidence" value="ECO:0007669"/>
    <property type="project" value="UniProtKB-KW"/>
</dbReference>
<dbReference type="CDD" id="cd16128">
    <property type="entry name" value="Ubl_ATG8"/>
    <property type="match status" value="1"/>
</dbReference>
<dbReference type="FunFam" id="3.10.20.90:FF:000010">
    <property type="entry name" value="Autophagy-related protein"/>
    <property type="match status" value="1"/>
</dbReference>
<dbReference type="Gene3D" id="3.10.20.90">
    <property type="entry name" value="Phosphatidylinositol 3-kinase Catalytic Subunit, Chain A, domain 1"/>
    <property type="match status" value="1"/>
</dbReference>
<dbReference type="InterPro" id="IPR004241">
    <property type="entry name" value="Atg8-like"/>
</dbReference>
<dbReference type="InterPro" id="IPR029071">
    <property type="entry name" value="Ubiquitin-like_domsf"/>
</dbReference>
<dbReference type="PANTHER" id="PTHR10969">
    <property type="entry name" value="MICROTUBULE-ASSOCIATED PROTEINS 1A/1B LIGHT CHAIN 3-RELATED"/>
    <property type="match status" value="1"/>
</dbReference>
<dbReference type="Pfam" id="PF02991">
    <property type="entry name" value="ATG8"/>
    <property type="match status" value="1"/>
</dbReference>
<dbReference type="SUPFAM" id="SSF54236">
    <property type="entry name" value="Ubiquitin-like"/>
    <property type="match status" value="1"/>
</dbReference>
<name>ATG8B_ARATH</name>